<keyword id="KW-0217">Developmental protein</keyword>
<keyword id="KW-0238">DNA-binding</keyword>
<keyword id="KW-0539">Nucleus</keyword>
<keyword id="KW-0804">Transcription</keyword>
<keyword id="KW-0805">Transcription regulation</keyword>
<protein>
    <recommendedName>
        <fullName>Protein cramped</fullName>
    </recommendedName>
</protein>
<comment type="function">
    <text evidence="1">Polycomb group (Pc-G) genes are needed to maintain expression patterns of the homeotic selector genes of the Antennapedia (Antp-C) and Bithorax (Bx-C) complexes, and hence for the maintenance of segmental determination. Can act as a modifier of position effect variegation (PEV) (By similarity).</text>
</comment>
<comment type="subcellular location">
    <subcellularLocation>
        <location evidence="2">Nucleus</location>
    </subcellularLocation>
    <text evidence="1">During S-phase in early embryogenesis.</text>
</comment>
<comment type="similarity">
    <text evidence="4">Belongs to the cramped family.</text>
</comment>
<proteinExistence type="inferred from homology"/>
<sequence>MEELCKQPPPPPPLPPPPSSPSVAIEDPLPNGKGGGAVVVPSIAKLPEEELLGSVTMHNCPGTRASARVIQKMKQDQTRPMTPPPSEREPNKKEEKAAQKTPSQLKTGSGKTTWTNVERNCFFDALNEFGKDFEAVANCINAKLKRRNANSDYSFKTKDQVRQHYYQTYHKICKYVRFSEELKKPAQELYTLINYGEMRRKLQFLTEKHFMKLKQLVYQGQITVRCKGKNIRIKTPSCKALRRLNQLDDSLEDIRLPSKVEVLVTPANMEAFGRVQSLAQNPRGRIIVPLHKKLISFIKTFEYKWRSANQRLHEEKSAIFPSSLPSTATNNNNNNNETEPMQPSVASLDPSMCFQPRPGVAIHRPLLSITAYLSSISICLTAYEERMGFKVRSETLGNLAGMPVAASKRLRTESGSEKRSPETKKPKPSASPPLEKTLDDGPLEGNLMKMENSSGDELAEEIHEFLGDILEAMPHPQAVTIPALSTTTGDTTTVAVALETSHDPVLQAYPASADLSHAMVTSVIQTTCAAAPAPSTLVSGSLTAPSVARSKRKEAKEAAAAAQARNFKPLLSDDILKRIRKGWTQANAADITIGDLYVVFGQDSKLELEYYWCEVDSSTAMASSILTINTVAPSSSSVATQTGTSASNAIQTSASSNCYVSATSTSSTSLPYNPNDCDSVERVRAVTTSSVSNKLKHLLLVANLSERVRKRQCNCGHTCDRKRDLMTKAQQLAEATATGVVDGNFRTPMLPVRRPISNIDPVRQLSALTRQKINRQVLVQRRLLPPTSVGDRPYDLLSVRQLHSGLFEPIDRVDGTSSGGISSSGSKPDSSMGATAASQDQEPGDQRALDFLNDEATQASNRDMPNLDICVATSRTDVSGSLNEAVQDESTNQSFFHGSMSPMHLLRDSTSNARWLEDNINDFSLTSLLGHLDEIDATRDILDPSSSMSIISESSVDFRHKFQEIAALLQQQEKD</sequence>
<evidence type="ECO:0000250" key="1"/>
<evidence type="ECO:0000255" key="2">
    <source>
        <dbReference type="PROSITE-ProRule" id="PRU00624"/>
    </source>
</evidence>
<evidence type="ECO:0000256" key="3">
    <source>
        <dbReference type="SAM" id="MobiDB-lite"/>
    </source>
</evidence>
<evidence type="ECO:0000305" key="4"/>
<dbReference type="EMBL" id="AF365399">
    <property type="protein sequence ID" value="AAN04294.1"/>
    <property type="molecule type" value="Genomic_DNA"/>
</dbReference>
<dbReference type="GO" id="GO:0005634">
    <property type="term" value="C:nucleus"/>
    <property type="evidence" value="ECO:0000250"/>
    <property type="project" value="UniProtKB"/>
</dbReference>
<dbReference type="GO" id="GO:0003682">
    <property type="term" value="F:chromatin binding"/>
    <property type="evidence" value="ECO:0007669"/>
    <property type="project" value="EnsemblMetazoa"/>
</dbReference>
<dbReference type="GO" id="GO:0003677">
    <property type="term" value="F:DNA binding"/>
    <property type="evidence" value="ECO:0007669"/>
    <property type="project" value="UniProtKB-KW"/>
</dbReference>
<dbReference type="GO" id="GO:0007379">
    <property type="term" value="P:segment specification"/>
    <property type="evidence" value="ECO:0000250"/>
    <property type="project" value="UniProtKB"/>
</dbReference>
<dbReference type="CDD" id="cd00167">
    <property type="entry name" value="SANT"/>
    <property type="match status" value="1"/>
</dbReference>
<dbReference type="Gene3D" id="1.10.10.60">
    <property type="entry name" value="Homeodomain-like"/>
    <property type="match status" value="1"/>
</dbReference>
<dbReference type="InterPro" id="IPR055315">
    <property type="entry name" value="Cramped-like"/>
</dbReference>
<dbReference type="InterPro" id="IPR001005">
    <property type="entry name" value="SANT/Myb"/>
</dbReference>
<dbReference type="InterPro" id="IPR017884">
    <property type="entry name" value="SANT_dom"/>
</dbReference>
<dbReference type="PANTHER" id="PTHR21677">
    <property type="entry name" value="CRAMPED PROTEIN"/>
    <property type="match status" value="1"/>
</dbReference>
<dbReference type="PANTHER" id="PTHR21677:SF1">
    <property type="entry name" value="PROTEIN CRAMPED-LIKE"/>
    <property type="match status" value="1"/>
</dbReference>
<dbReference type="SMART" id="SM00717">
    <property type="entry name" value="SANT"/>
    <property type="match status" value="1"/>
</dbReference>
<dbReference type="PROSITE" id="PS51293">
    <property type="entry name" value="SANT"/>
    <property type="match status" value="1"/>
</dbReference>
<feature type="chain" id="PRO_0000197139" description="Protein cramped">
    <location>
        <begin position="1"/>
        <end position="975"/>
    </location>
</feature>
<feature type="domain" description="SANT" evidence="2">
    <location>
        <begin position="109"/>
        <end position="173"/>
    </location>
</feature>
<feature type="region of interest" description="Disordered" evidence="3">
    <location>
        <begin position="1"/>
        <end position="37"/>
    </location>
</feature>
<feature type="region of interest" description="Disordered" evidence="3">
    <location>
        <begin position="71"/>
        <end position="111"/>
    </location>
</feature>
<feature type="region of interest" description="Disordered" evidence="3">
    <location>
        <begin position="318"/>
        <end position="346"/>
    </location>
</feature>
<feature type="region of interest" description="Disordered" evidence="3">
    <location>
        <begin position="403"/>
        <end position="450"/>
    </location>
</feature>
<feature type="region of interest" description="Disordered" evidence="3">
    <location>
        <begin position="809"/>
        <end position="844"/>
    </location>
</feature>
<feature type="compositionally biased region" description="Pro residues" evidence="3">
    <location>
        <begin position="7"/>
        <end position="20"/>
    </location>
</feature>
<feature type="compositionally biased region" description="Basic and acidic residues" evidence="3">
    <location>
        <begin position="86"/>
        <end position="98"/>
    </location>
</feature>
<feature type="compositionally biased region" description="Polar residues" evidence="3">
    <location>
        <begin position="100"/>
        <end position="111"/>
    </location>
</feature>
<feature type="compositionally biased region" description="Basic and acidic residues" evidence="3">
    <location>
        <begin position="410"/>
        <end position="425"/>
    </location>
</feature>
<feature type="compositionally biased region" description="Low complexity" evidence="3">
    <location>
        <begin position="815"/>
        <end position="833"/>
    </location>
</feature>
<accession>Q8MX88</accession>
<organism>
    <name type="scientific">Drosophila sechellia</name>
    <name type="common">Fruit fly</name>
    <dbReference type="NCBI Taxonomy" id="7238"/>
    <lineage>
        <taxon>Eukaryota</taxon>
        <taxon>Metazoa</taxon>
        <taxon>Ecdysozoa</taxon>
        <taxon>Arthropoda</taxon>
        <taxon>Hexapoda</taxon>
        <taxon>Insecta</taxon>
        <taxon>Pterygota</taxon>
        <taxon>Neoptera</taxon>
        <taxon>Endopterygota</taxon>
        <taxon>Diptera</taxon>
        <taxon>Brachycera</taxon>
        <taxon>Muscomorpha</taxon>
        <taxon>Ephydroidea</taxon>
        <taxon>Drosophilidae</taxon>
        <taxon>Drosophila</taxon>
        <taxon>Sophophora</taxon>
    </lineage>
</organism>
<gene>
    <name type="primary">crm</name>
</gene>
<reference key="1">
    <citation type="journal article" date="2002" name="Proc. Natl. Acad. Sci. U.S.A.">
        <title>Hitchhiking mapping: a population-based fine-mapping strategy for adaptive mutations in Drosophilamelanogaster.</title>
        <authorList>
            <person name="Harr B."/>
            <person name="Kauer M."/>
            <person name="Schloetterer C."/>
        </authorList>
    </citation>
    <scope>NUCLEOTIDE SEQUENCE [GENOMIC DNA]</scope>
    <source>
        <strain>s2</strain>
    </source>
</reference>
<name>CRM_DROSE</name>